<dbReference type="EMBL" id="AE006468">
    <property type="protein sequence ID" value="AAL20068.1"/>
    <property type="status" value="ALT_INIT"/>
    <property type="molecule type" value="Genomic_DNA"/>
</dbReference>
<dbReference type="EMBL" id="AJ002301">
    <property type="protein sequence ID" value="CAA05311.1"/>
    <property type="molecule type" value="Genomic_DNA"/>
</dbReference>
<dbReference type="RefSeq" id="NP_460109.1">
    <property type="nucleotide sequence ID" value="NC_003197.2"/>
</dbReference>
<dbReference type="RefSeq" id="WP_000337814.1">
    <property type="nucleotide sequence ID" value="NC_003197.2"/>
</dbReference>
<dbReference type="STRING" id="99287.STM1138"/>
<dbReference type="PaxDb" id="99287-STM1138"/>
<dbReference type="GeneID" id="1252656"/>
<dbReference type="KEGG" id="stm:STM1138"/>
<dbReference type="PATRIC" id="fig|99287.12.peg.1205"/>
<dbReference type="HOGENOM" id="CLU_104628_0_0_6"/>
<dbReference type="PhylomeDB" id="O54290"/>
<dbReference type="Proteomes" id="UP000001014">
    <property type="component" value="Chromosome"/>
</dbReference>
<dbReference type="GO" id="GO:0005886">
    <property type="term" value="C:plasma membrane"/>
    <property type="evidence" value="ECO:0007669"/>
    <property type="project" value="UniProtKB-SubCell"/>
</dbReference>
<dbReference type="InterPro" id="IPR009476">
    <property type="entry name" value="DUF1097"/>
</dbReference>
<dbReference type="Pfam" id="PF06496">
    <property type="entry name" value="DUF1097"/>
    <property type="match status" value="1"/>
</dbReference>
<feature type="chain" id="PRO_0000168809" description="Inner membrane protein YcdZ">
    <location>
        <begin position="1"/>
        <end position="160"/>
    </location>
</feature>
<feature type="transmembrane region" description="Helical" evidence="2">
    <location>
        <begin position="20"/>
        <end position="42"/>
    </location>
</feature>
<feature type="transmembrane region" description="Helical" evidence="2">
    <location>
        <begin position="50"/>
        <end position="70"/>
    </location>
</feature>
<feature type="transmembrane region" description="Helical" evidence="2">
    <location>
        <begin position="72"/>
        <end position="92"/>
    </location>
</feature>
<feature type="transmembrane region" description="Helical" evidence="2">
    <location>
        <begin position="99"/>
        <end position="119"/>
    </location>
</feature>
<feature type="transmembrane region" description="Helical" evidence="2">
    <location>
        <begin position="123"/>
        <end position="143"/>
    </location>
</feature>
<evidence type="ECO:0000250" key="1"/>
<evidence type="ECO:0000255" key="2"/>
<evidence type="ECO:0000305" key="3"/>
<organism>
    <name type="scientific">Salmonella typhimurium (strain LT2 / SGSC1412 / ATCC 700720)</name>
    <dbReference type="NCBI Taxonomy" id="99287"/>
    <lineage>
        <taxon>Bacteria</taxon>
        <taxon>Pseudomonadati</taxon>
        <taxon>Pseudomonadota</taxon>
        <taxon>Gammaproteobacteria</taxon>
        <taxon>Enterobacterales</taxon>
        <taxon>Enterobacteriaceae</taxon>
        <taxon>Salmonella</taxon>
    </lineage>
</organism>
<name>YCDZ_SALTY</name>
<sequence length="160" mass="16819">MNILLSIAITTGILSGIWGWGAVSLGLLSWAGFLGCTAYFACPQGGFKGLLISACTLLSGMVWALVIIHGSALAPHLEIVSYVLTGIVAFLMCIQAKQLLLSFVPGTFIGACATFAGQGDWRLVLPSLALGLIFGYAMKNSGLWLASRREQHSANTAVTK</sequence>
<gene>
    <name type="primary">ycdZ</name>
    <name type="ordered locus">STM1138</name>
</gene>
<keyword id="KW-0997">Cell inner membrane</keyword>
<keyword id="KW-1003">Cell membrane</keyword>
<keyword id="KW-0472">Membrane</keyword>
<keyword id="KW-1185">Reference proteome</keyword>
<keyword id="KW-0812">Transmembrane</keyword>
<keyword id="KW-1133">Transmembrane helix</keyword>
<proteinExistence type="inferred from homology"/>
<accession>O54290</accession>
<comment type="subcellular location">
    <subcellularLocation>
        <location evidence="1">Cell inner membrane</location>
        <topology evidence="1">Multi-pass membrane protein</topology>
    </subcellularLocation>
</comment>
<comment type="similarity">
    <text evidence="3">To E.coli YahC.</text>
</comment>
<comment type="sequence caution" evidence="3">
    <conflict type="erroneous initiation">
        <sequence resource="EMBL-CDS" id="AAL20068"/>
    </conflict>
</comment>
<reference key="1">
    <citation type="journal article" date="2001" name="Nature">
        <title>Complete genome sequence of Salmonella enterica serovar Typhimurium LT2.</title>
        <authorList>
            <person name="McClelland M."/>
            <person name="Sanderson K.E."/>
            <person name="Spieth J."/>
            <person name="Clifton S.W."/>
            <person name="Latreille P."/>
            <person name="Courtney L."/>
            <person name="Porwollik S."/>
            <person name="Ali J."/>
            <person name="Dante M."/>
            <person name="Du F."/>
            <person name="Hou S."/>
            <person name="Layman D."/>
            <person name="Leonard S."/>
            <person name="Nguyen C."/>
            <person name="Scott K."/>
            <person name="Holmes A."/>
            <person name="Grewal N."/>
            <person name="Mulvaney E."/>
            <person name="Ryan E."/>
            <person name="Sun H."/>
            <person name="Florea L."/>
            <person name="Miller W."/>
            <person name="Stoneking T."/>
            <person name="Nhan M."/>
            <person name="Waterston R."/>
            <person name="Wilson R.K."/>
        </authorList>
    </citation>
    <scope>NUCLEOTIDE SEQUENCE [LARGE SCALE GENOMIC DNA]</scope>
    <source>
        <strain>LT2 / SGSC1412 / ATCC 700720</strain>
    </source>
</reference>
<reference key="2">
    <citation type="journal article" date="1998" name="J. Bacteriol.">
        <title>Curli fibers are highly conserved between Salmonella typhimurium and Escherichia coli with respect to operon structure and regulation.</title>
        <authorList>
            <person name="Romling U."/>
            <person name="Bian Z."/>
            <person name="Hammar M."/>
            <person name="Sierralta W.D."/>
            <person name="Normark S."/>
        </authorList>
    </citation>
    <scope>NUCLEOTIDE SEQUENCE [GENOMIC DNA] OF 55-160</scope>
    <source>
        <strain>SR-11</strain>
    </source>
</reference>
<protein>
    <recommendedName>
        <fullName>Inner membrane protein YcdZ</fullName>
    </recommendedName>
</protein>